<protein>
    <recommendedName>
        <fullName>Uncharacterized protein At1g76070</fullName>
    </recommendedName>
</protein>
<name>Y1607_ARATH</name>
<sequence length="272" mass="30286">MDIKHHTSTSKPKNKNKLLKMLPKAMSFGHRVPPFSPGRDLHHNNHHNYTAANKMFFSGPMVPLVPNAARVRRNKSDAVWDEPTSPKVSCIGQIKLGKSKCPTGKKNKAPSSLIPKISKTSTSSLTKEDEKGRLSKIKSIFSFSPASGRNTSRKSHPTAVSAADEHPVTVVSTAAVPSLGQMKKFASSRDALGDFDWAVEMKHEEESPADHHRGYYSDDDTRGAYLRYDDDEDEDDIIIPFSAPLGLKPKKEVNLWKRRTMDPPKPLHLQTI</sequence>
<comment type="interaction">
    <interactant intactId="EBI-25519221">
        <id>Q9SGS5</id>
    </interactant>
    <interactant intactId="EBI-4426649">
        <id>Q17TI5</id>
        <label>BRX</label>
    </interactant>
    <organismsDiffer>false</organismsDiffer>
    <experiments>3</experiments>
</comment>
<comment type="sequence caution" evidence="2">
    <conflict type="erroneous initiation">
        <sequence resource="EMBL-CDS" id="AAM65454"/>
    </conflict>
</comment>
<proteinExistence type="evidence at protein level"/>
<evidence type="ECO:0000256" key="1">
    <source>
        <dbReference type="SAM" id="MobiDB-lite"/>
    </source>
</evidence>
<evidence type="ECO:0000305" key="2"/>
<evidence type="ECO:0007744" key="3">
    <source>
    </source>
</evidence>
<gene>
    <name type="ordered locus">At1g76070</name>
    <name type="ORF">T23E18.1</name>
    <name type="ORF">T4O12.28</name>
</gene>
<organism>
    <name type="scientific">Arabidopsis thaliana</name>
    <name type="common">Mouse-ear cress</name>
    <dbReference type="NCBI Taxonomy" id="3702"/>
    <lineage>
        <taxon>Eukaryota</taxon>
        <taxon>Viridiplantae</taxon>
        <taxon>Streptophyta</taxon>
        <taxon>Embryophyta</taxon>
        <taxon>Tracheophyta</taxon>
        <taxon>Spermatophyta</taxon>
        <taxon>Magnoliopsida</taxon>
        <taxon>eudicotyledons</taxon>
        <taxon>Gunneridae</taxon>
        <taxon>Pentapetalae</taxon>
        <taxon>rosids</taxon>
        <taxon>malvids</taxon>
        <taxon>Brassicales</taxon>
        <taxon>Brassicaceae</taxon>
        <taxon>Camelineae</taxon>
        <taxon>Arabidopsis</taxon>
    </lineage>
</organism>
<feature type="chain" id="PRO_0000305187" description="Uncharacterized protein At1g76070">
    <location>
        <begin position="1"/>
        <end position="272"/>
    </location>
</feature>
<feature type="region of interest" description="Disordered" evidence="1">
    <location>
        <begin position="101"/>
        <end position="130"/>
    </location>
</feature>
<feature type="compositionally biased region" description="Low complexity" evidence="1">
    <location>
        <begin position="110"/>
        <end position="125"/>
    </location>
</feature>
<feature type="modified residue" description="Phosphoserine" evidence="3">
    <location>
        <position position="142"/>
    </location>
</feature>
<accession>Q9SGS5</accession>
<accession>Q8LAC9</accession>
<accession>Q9LQR1</accession>
<dbReference type="EMBL" id="AC007396">
    <property type="protein sequence ID" value="AAF79816.1"/>
    <property type="molecule type" value="Genomic_DNA"/>
</dbReference>
<dbReference type="EMBL" id="AC009978">
    <property type="protein sequence ID" value="AAF17625.1"/>
    <property type="molecule type" value="Genomic_DNA"/>
</dbReference>
<dbReference type="EMBL" id="CP002684">
    <property type="protein sequence ID" value="AEE35793.1"/>
    <property type="molecule type" value="Genomic_DNA"/>
</dbReference>
<dbReference type="EMBL" id="BT003120">
    <property type="protein sequence ID" value="AAO24552.1"/>
    <property type="molecule type" value="mRNA"/>
</dbReference>
<dbReference type="EMBL" id="AY087903">
    <property type="protein sequence ID" value="AAM65454.1"/>
    <property type="status" value="ALT_INIT"/>
    <property type="molecule type" value="mRNA"/>
</dbReference>
<dbReference type="EMBL" id="AK228131">
    <property type="protein sequence ID" value="BAF00088.1"/>
    <property type="molecule type" value="mRNA"/>
</dbReference>
<dbReference type="RefSeq" id="NP_565125.1">
    <property type="nucleotide sequence ID" value="NM_106256.1"/>
</dbReference>
<dbReference type="BioGRID" id="29158">
    <property type="interactions" value="1"/>
</dbReference>
<dbReference type="FunCoup" id="Q9SGS5">
    <property type="interactions" value="328"/>
</dbReference>
<dbReference type="IntAct" id="Q9SGS5">
    <property type="interactions" value="1"/>
</dbReference>
<dbReference type="STRING" id="3702.Q9SGS5"/>
<dbReference type="iPTMnet" id="Q9SGS5"/>
<dbReference type="SwissPalm" id="Q9SGS5"/>
<dbReference type="PaxDb" id="3702-AT1G76070.1"/>
<dbReference type="ProteomicsDB" id="242441"/>
<dbReference type="EnsemblPlants" id="AT1G76070.1">
    <property type="protein sequence ID" value="AT1G76070.1"/>
    <property type="gene ID" value="AT1G76070"/>
</dbReference>
<dbReference type="GeneID" id="843939"/>
<dbReference type="Gramene" id="AT1G76070.1">
    <property type="protein sequence ID" value="AT1G76070.1"/>
    <property type="gene ID" value="AT1G76070"/>
</dbReference>
<dbReference type="KEGG" id="ath:AT1G76070"/>
<dbReference type="Araport" id="AT1G76070"/>
<dbReference type="TAIR" id="AT1G76070"/>
<dbReference type="eggNOG" id="ENOG502RXP4">
    <property type="taxonomic scope" value="Eukaryota"/>
</dbReference>
<dbReference type="HOGENOM" id="CLU_097723_0_0_1"/>
<dbReference type="InParanoid" id="Q9SGS5"/>
<dbReference type="OMA" id="GRDHKFK"/>
<dbReference type="OrthoDB" id="1926132at2759"/>
<dbReference type="PhylomeDB" id="Q9SGS5"/>
<dbReference type="PRO" id="PR:Q9SGS5"/>
<dbReference type="Proteomes" id="UP000006548">
    <property type="component" value="Chromosome 1"/>
</dbReference>
<dbReference type="ExpressionAtlas" id="Q9SGS5">
    <property type="expression patterns" value="baseline and differential"/>
</dbReference>
<dbReference type="InterPro" id="IPR038796">
    <property type="entry name" value="At1g76070-like"/>
</dbReference>
<dbReference type="PANTHER" id="PTHR34779">
    <property type="entry name" value="OS09G0542900 PROTEIN"/>
    <property type="match status" value="1"/>
</dbReference>
<dbReference type="PANTHER" id="PTHR34779:SF1">
    <property type="entry name" value="OS09G0542900 PROTEIN"/>
    <property type="match status" value="1"/>
</dbReference>
<reference key="1">
    <citation type="journal article" date="2000" name="Nature">
        <title>Sequence and analysis of chromosome 1 of the plant Arabidopsis thaliana.</title>
        <authorList>
            <person name="Theologis A."/>
            <person name="Ecker J.R."/>
            <person name="Palm C.J."/>
            <person name="Federspiel N.A."/>
            <person name="Kaul S."/>
            <person name="White O."/>
            <person name="Alonso J."/>
            <person name="Altafi H."/>
            <person name="Araujo R."/>
            <person name="Bowman C.L."/>
            <person name="Brooks S.Y."/>
            <person name="Buehler E."/>
            <person name="Chan A."/>
            <person name="Chao Q."/>
            <person name="Chen H."/>
            <person name="Cheuk R.F."/>
            <person name="Chin C.W."/>
            <person name="Chung M.K."/>
            <person name="Conn L."/>
            <person name="Conway A.B."/>
            <person name="Conway A.R."/>
            <person name="Creasy T.H."/>
            <person name="Dewar K."/>
            <person name="Dunn P."/>
            <person name="Etgu P."/>
            <person name="Feldblyum T.V."/>
            <person name="Feng J.-D."/>
            <person name="Fong B."/>
            <person name="Fujii C.Y."/>
            <person name="Gill J.E."/>
            <person name="Goldsmith A.D."/>
            <person name="Haas B."/>
            <person name="Hansen N.F."/>
            <person name="Hughes B."/>
            <person name="Huizar L."/>
            <person name="Hunter J.L."/>
            <person name="Jenkins J."/>
            <person name="Johnson-Hopson C."/>
            <person name="Khan S."/>
            <person name="Khaykin E."/>
            <person name="Kim C.J."/>
            <person name="Koo H.L."/>
            <person name="Kremenetskaia I."/>
            <person name="Kurtz D.B."/>
            <person name="Kwan A."/>
            <person name="Lam B."/>
            <person name="Langin-Hooper S."/>
            <person name="Lee A."/>
            <person name="Lee J.M."/>
            <person name="Lenz C.A."/>
            <person name="Li J.H."/>
            <person name="Li Y.-P."/>
            <person name="Lin X."/>
            <person name="Liu S.X."/>
            <person name="Liu Z.A."/>
            <person name="Luros J.S."/>
            <person name="Maiti R."/>
            <person name="Marziali A."/>
            <person name="Militscher J."/>
            <person name="Miranda M."/>
            <person name="Nguyen M."/>
            <person name="Nierman W.C."/>
            <person name="Osborne B.I."/>
            <person name="Pai G."/>
            <person name="Peterson J."/>
            <person name="Pham P.K."/>
            <person name="Rizzo M."/>
            <person name="Rooney T."/>
            <person name="Rowley D."/>
            <person name="Sakano H."/>
            <person name="Salzberg S.L."/>
            <person name="Schwartz J.R."/>
            <person name="Shinn P."/>
            <person name="Southwick A.M."/>
            <person name="Sun H."/>
            <person name="Tallon L.J."/>
            <person name="Tambunga G."/>
            <person name="Toriumi M.J."/>
            <person name="Town C.D."/>
            <person name="Utterback T."/>
            <person name="Van Aken S."/>
            <person name="Vaysberg M."/>
            <person name="Vysotskaia V.S."/>
            <person name="Walker M."/>
            <person name="Wu D."/>
            <person name="Yu G."/>
            <person name="Fraser C.M."/>
            <person name="Venter J.C."/>
            <person name="Davis R.W."/>
        </authorList>
    </citation>
    <scope>NUCLEOTIDE SEQUENCE [LARGE SCALE GENOMIC DNA]</scope>
    <source>
        <strain>cv. Columbia</strain>
    </source>
</reference>
<reference key="2">
    <citation type="journal article" date="2017" name="Plant J.">
        <title>Araport11: a complete reannotation of the Arabidopsis thaliana reference genome.</title>
        <authorList>
            <person name="Cheng C.Y."/>
            <person name="Krishnakumar V."/>
            <person name="Chan A.P."/>
            <person name="Thibaud-Nissen F."/>
            <person name="Schobel S."/>
            <person name="Town C.D."/>
        </authorList>
    </citation>
    <scope>GENOME REANNOTATION</scope>
    <source>
        <strain>cv. Columbia</strain>
    </source>
</reference>
<reference key="3">
    <citation type="journal article" date="2003" name="Science">
        <title>Empirical analysis of transcriptional activity in the Arabidopsis genome.</title>
        <authorList>
            <person name="Yamada K."/>
            <person name="Lim J."/>
            <person name="Dale J.M."/>
            <person name="Chen H."/>
            <person name="Shinn P."/>
            <person name="Palm C.J."/>
            <person name="Southwick A.M."/>
            <person name="Wu H.C."/>
            <person name="Kim C.J."/>
            <person name="Nguyen M."/>
            <person name="Pham P.K."/>
            <person name="Cheuk R.F."/>
            <person name="Karlin-Newmann G."/>
            <person name="Liu S.X."/>
            <person name="Lam B."/>
            <person name="Sakano H."/>
            <person name="Wu T."/>
            <person name="Yu G."/>
            <person name="Miranda M."/>
            <person name="Quach H.L."/>
            <person name="Tripp M."/>
            <person name="Chang C.H."/>
            <person name="Lee J.M."/>
            <person name="Toriumi M.J."/>
            <person name="Chan M.M."/>
            <person name="Tang C.C."/>
            <person name="Onodera C.S."/>
            <person name="Deng J.M."/>
            <person name="Akiyama K."/>
            <person name="Ansari Y."/>
            <person name="Arakawa T."/>
            <person name="Banh J."/>
            <person name="Banno F."/>
            <person name="Bowser L."/>
            <person name="Brooks S.Y."/>
            <person name="Carninci P."/>
            <person name="Chao Q."/>
            <person name="Choy N."/>
            <person name="Enju A."/>
            <person name="Goldsmith A.D."/>
            <person name="Gurjal M."/>
            <person name="Hansen N.F."/>
            <person name="Hayashizaki Y."/>
            <person name="Johnson-Hopson C."/>
            <person name="Hsuan V.W."/>
            <person name="Iida K."/>
            <person name="Karnes M."/>
            <person name="Khan S."/>
            <person name="Koesema E."/>
            <person name="Ishida J."/>
            <person name="Jiang P.X."/>
            <person name="Jones T."/>
            <person name="Kawai J."/>
            <person name="Kamiya A."/>
            <person name="Meyers C."/>
            <person name="Nakajima M."/>
            <person name="Narusaka M."/>
            <person name="Seki M."/>
            <person name="Sakurai T."/>
            <person name="Satou M."/>
            <person name="Tamse R."/>
            <person name="Vaysberg M."/>
            <person name="Wallender E.K."/>
            <person name="Wong C."/>
            <person name="Yamamura Y."/>
            <person name="Yuan S."/>
            <person name="Shinozaki K."/>
            <person name="Davis R.W."/>
            <person name="Theologis A."/>
            <person name="Ecker J.R."/>
        </authorList>
    </citation>
    <scope>NUCLEOTIDE SEQUENCE [LARGE SCALE MRNA]</scope>
    <source>
        <strain>cv. Columbia</strain>
    </source>
</reference>
<reference key="4">
    <citation type="submission" date="2002-03" db="EMBL/GenBank/DDBJ databases">
        <title>Full-length cDNA from Arabidopsis thaliana.</title>
        <authorList>
            <person name="Brover V.V."/>
            <person name="Troukhan M.E."/>
            <person name="Alexandrov N.A."/>
            <person name="Lu Y.-P."/>
            <person name="Flavell R.B."/>
            <person name="Feldmann K.A."/>
        </authorList>
    </citation>
    <scope>NUCLEOTIDE SEQUENCE [LARGE SCALE MRNA]</scope>
</reference>
<reference key="5">
    <citation type="submission" date="2006-07" db="EMBL/GenBank/DDBJ databases">
        <title>Large-scale analysis of RIKEN Arabidopsis full-length (RAFL) cDNAs.</title>
        <authorList>
            <person name="Totoki Y."/>
            <person name="Seki M."/>
            <person name="Ishida J."/>
            <person name="Nakajima M."/>
            <person name="Enju A."/>
            <person name="Kamiya A."/>
            <person name="Narusaka M."/>
            <person name="Shin-i T."/>
            <person name="Nakagawa M."/>
            <person name="Sakamoto N."/>
            <person name="Oishi K."/>
            <person name="Kohara Y."/>
            <person name="Kobayashi M."/>
            <person name="Toyoda A."/>
            <person name="Sakaki Y."/>
            <person name="Sakurai T."/>
            <person name="Iida K."/>
            <person name="Akiyama K."/>
            <person name="Satou M."/>
            <person name="Toyoda T."/>
            <person name="Konagaya A."/>
            <person name="Carninci P."/>
            <person name="Kawai J."/>
            <person name="Hayashizaki Y."/>
            <person name="Shinozaki K."/>
        </authorList>
    </citation>
    <scope>NUCLEOTIDE SEQUENCE [LARGE SCALE MRNA]</scope>
    <source>
        <strain>cv. Columbia</strain>
    </source>
</reference>
<reference key="6">
    <citation type="journal article" date="2009" name="Plant Physiol.">
        <title>Large-scale Arabidopsis phosphoproteome profiling reveals novel chloroplast kinase substrates and phosphorylation networks.</title>
        <authorList>
            <person name="Reiland S."/>
            <person name="Messerli G."/>
            <person name="Baerenfaller K."/>
            <person name="Gerrits B."/>
            <person name="Endler A."/>
            <person name="Grossmann J."/>
            <person name="Gruissem W."/>
            <person name="Baginsky S."/>
        </authorList>
    </citation>
    <scope>PHOSPHORYLATION [LARGE SCALE ANALYSIS] AT SER-142</scope>
    <scope>IDENTIFICATION BY MASS SPECTROMETRY [LARGE SCALE ANALYSIS]</scope>
</reference>
<keyword id="KW-0597">Phosphoprotein</keyword>
<keyword id="KW-1185">Reference proteome</keyword>